<comment type="function">
    <text evidence="1 2 6">Acts to repress the ubiquitination and subsequent endoplasmic reticulum-associated degradation of CHRNA3 by the STUB1-VCP-UBXN2A complex in cortical neurons (PubMed:26265139). Also acts to promote the translocation of CHRNA3 to the plasma membrane and subsequently increases plasma membrane acetylcholine-gated ion-channel activation (By similarity). Plays a role in the inhibition of STUB1-mediated TP53 degradation, via its interaction with HSPA9 which acts to inhibit TP53 binding to HSPA9 (By similarity). Positively mediates the ubiquitination and proteosomal degradation of RICTOR, may thereby act as a negative regulator of the mTORC2 pathway (By similarity).</text>
</comment>
<comment type="subunit">
    <text evidence="1 5 6">Part of a complex composed of STUB1/CHIP, VCP/p97, CHRNA3, and UBXN2A that modulates the ubiquitination and endoplasmic reticulum-associated degradation (ERAD) of CHRNA3 (PubMed:26265139). Within the complex UBXN2A acts as a scaffold protein required for the interaction of CHRNA3 with VCP/p97, this interaction also inhibits CHRNA3 ubiquitination by STUB1/CHIP and subsequently ERAD (PubMed:26265139). Interacts (via SEP domain) with CHRNA3 and interacts (via UBX domain) with VCP/P97; these interactions are required for the interaction of CHRNA3 with the STUB1-VCP-UBXN2A complex (PubMed:19474315, PubMed:26265139). Interacts with HSPA9/MOT-2 (via SBD domain); the interaction inhibits HSPA9/MOT-2 interaction with and degradation of p53, thereby promotes p53 translocation to the nucleus (By similarity). Interacts with RICTOR (By similarity).</text>
</comment>
<comment type="subcellular location">
    <subcellularLocation>
        <location evidence="5">Golgi apparatus</location>
    </subcellularLocation>
    <subcellularLocation>
        <location evidence="5">Endoplasmic reticulum</location>
    </subcellularLocation>
    <subcellularLocation>
        <location evidence="2">Perikaryon</location>
    </subcellularLocation>
    <subcellularLocation>
        <location evidence="2">Cell projection</location>
        <location evidence="2">Dendrite</location>
    </subcellularLocation>
    <subcellularLocation>
        <location evidence="1">Nucleus</location>
    </subcellularLocation>
    <subcellularLocation>
        <location evidence="5">Cytoplasm</location>
    </subcellularLocation>
    <text evidence="2">Expressed at the axon initial segment.</text>
</comment>
<comment type="PTM">
    <text evidence="2">Ubiquitinated.</text>
</comment>
<name>UBX2A_RAT</name>
<feature type="chain" id="PRO_0000459584" description="UBX domain-containing protein 2A">
    <location>
        <begin position="1"/>
        <end position="258"/>
    </location>
</feature>
<feature type="domain" description="SEP" evidence="4">
    <location>
        <begin position="61"/>
        <end position="125"/>
    </location>
</feature>
<feature type="domain" description="UBX" evidence="3">
    <location>
        <begin position="170"/>
        <end position="247"/>
    </location>
</feature>
<feature type="region of interest" description="Required for inhibition of CHRNA3 ubiquitination and translocation of CHRNA3 to the plasma membrane resulting in an increase in acetylcholine-gated nicotinic acetylcholine receptor currents" evidence="2">
    <location>
        <begin position="1"/>
        <end position="165"/>
    </location>
</feature>
<feature type="region of interest" description="Required for interaction with CHRNA3" evidence="1">
    <location>
        <begin position="1"/>
        <end position="152"/>
    </location>
</feature>
<feature type="region of interest" description="Required for interaction with VCP" evidence="1">
    <location>
        <begin position="168"/>
        <end position="258"/>
    </location>
</feature>
<accession>D3ZID8</accession>
<accession>A6HAJ7</accession>
<sequence>MKEVDNLDSIKEEWVCETGPPDNQPLNDNPQKDCEYFVDSLFEEAEKAGAKCLSPTEQKKQVDVNIKLWKNGFTVNDDFRSYSDGASQQFLNSIKKGELPSELQGVFDKDEVDVKVEDKKNEVCMSTKPVFQPFSGQGHRLGSATPRIVSKAKSIEVDNKSTLSAVSLNNLEPITRIQIWLANGERTVQRFNISHRVSHIKDFIEKYQGTQRSPPFALATALPFLRFLDETLTLEEADLQNAVIIQRLQKTAEPFRKL</sequence>
<protein>
    <recommendedName>
        <fullName evidence="7">UBX domain-containing protein 2A</fullName>
    </recommendedName>
    <alternativeName>
        <fullName evidence="11">UBX domain protein 2A</fullName>
    </alternativeName>
</protein>
<keyword id="KW-0966">Cell projection</keyword>
<keyword id="KW-0963">Cytoplasm</keyword>
<keyword id="KW-0256">Endoplasmic reticulum</keyword>
<keyword id="KW-0333">Golgi apparatus</keyword>
<keyword id="KW-0539">Nucleus</keyword>
<keyword id="KW-1185">Reference proteome</keyword>
<keyword id="KW-0832">Ubl conjugation</keyword>
<proteinExistence type="evidence at protein level"/>
<organism evidence="10">
    <name type="scientific">Rattus norvegicus</name>
    <name type="common">Rat</name>
    <dbReference type="NCBI Taxonomy" id="10116"/>
    <lineage>
        <taxon>Eukaryota</taxon>
        <taxon>Metazoa</taxon>
        <taxon>Chordata</taxon>
        <taxon>Craniata</taxon>
        <taxon>Vertebrata</taxon>
        <taxon>Euteleostomi</taxon>
        <taxon>Mammalia</taxon>
        <taxon>Eutheria</taxon>
        <taxon>Euarchontoglires</taxon>
        <taxon>Glires</taxon>
        <taxon>Rodentia</taxon>
        <taxon>Myomorpha</taxon>
        <taxon>Muroidea</taxon>
        <taxon>Muridae</taxon>
        <taxon>Murinae</taxon>
        <taxon>Rattus</taxon>
    </lineage>
</organism>
<dbReference type="EMBL" id="CH473947">
    <property type="protein sequence ID" value="EDM03052.1"/>
    <property type="molecule type" value="Genomic_DNA"/>
</dbReference>
<dbReference type="EMBL" id="CH473947">
    <property type="protein sequence ID" value="EDM03053.1"/>
    <property type="molecule type" value="Genomic_DNA"/>
</dbReference>
<dbReference type="RefSeq" id="NP_001102952.1">
    <property type="nucleotide sequence ID" value="NM_001109482.2"/>
</dbReference>
<dbReference type="RefSeq" id="XP_006239923.1">
    <property type="nucleotide sequence ID" value="XM_006239861.3"/>
</dbReference>
<dbReference type="RefSeq" id="XP_038968858.1">
    <property type="nucleotide sequence ID" value="XM_039112930.2"/>
</dbReference>
<dbReference type="RefSeq" id="XP_038968859.1">
    <property type="nucleotide sequence ID" value="XM_039112931.2"/>
</dbReference>
<dbReference type="RefSeq" id="XP_063118547.1">
    <property type="nucleotide sequence ID" value="XM_063262477.1"/>
</dbReference>
<dbReference type="RefSeq" id="XP_063118549.1">
    <property type="nucleotide sequence ID" value="XM_063262479.1"/>
</dbReference>
<dbReference type="SMR" id="D3ZID8"/>
<dbReference type="FunCoup" id="D3ZID8">
    <property type="interactions" value="506"/>
</dbReference>
<dbReference type="STRING" id="10116.ENSRNOP00000006668"/>
<dbReference type="PhosphoSitePlus" id="D3ZID8"/>
<dbReference type="PaxDb" id="10116-ENSRNOP00000006668"/>
<dbReference type="PeptideAtlas" id="D3ZID8"/>
<dbReference type="Ensembl" id="ENSRNOT00000098597.1">
    <property type="protein sequence ID" value="ENSRNOP00000076999.1"/>
    <property type="gene ID" value="ENSRNOG00000068687.1"/>
</dbReference>
<dbReference type="Ensembl" id="ENSRNOT00000112658.1">
    <property type="protein sequence ID" value="ENSRNOP00000097141.1"/>
    <property type="gene ID" value="ENSRNOG00000065514.1"/>
</dbReference>
<dbReference type="GeneID" id="685859"/>
<dbReference type="KEGG" id="rno:685859"/>
<dbReference type="AGR" id="RGD:1589027"/>
<dbReference type="CTD" id="165324"/>
<dbReference type="RGD" id="1589027">
    <property type="gene designation" value="Ubxn2a"/>
</dbReference>
<dbReference type="eggNOG" id="KOG2086">
    <property type="taxonomic scope" value="Eukaryota"/>
</dbReference>
<dbReference type="GeneTree" id="ENSGT00520000055567"/>
<dbReference type="OMA" id="SRCQRSC"/>
<dbReference type="OrthoDB" id="25887at2759"/>
<dbReference type="PRO" id="PR:D3ZID8"/>
<dbReference type="Proteomes" id="UP000002494">
    <property type="component" value="Chromosome 20"/>
</dbReference>
<dbReference type="Proteomes" id="UP000002494">
    <property type="component" value="Chromosome 6"/>
</dbReference>
<dbReference type="Proteomes" id="UP000234681">
    <property type="component" value="Chromosome 6"/>
</dbReference>
<dbReference type="Bgee" id="ENSRNOG00000004950">
    <property type="expression patterns" value="Expressed in quadriceps femoris and 18 other cell types or tissues"/>
</dbReference>
<dbReference type="GO" id="GO:0005801">
    <property type="term" value="C:cis-Golgi network"/>
    <property type="evidence" value="ECO:0000266"/>
    <property type="project" value="RGD"/>
</dbReference>
<dbReference type="GO" id="GO:0005737">
    <property type="term" value="C:cytoplasm"/>
    <property type="evidence" value="ECO:0000266"/>
    <property type="project" value="RGD"/>
</dbReference>
<dbReference type="GO" id="GO:0005829">
    <property type="term" value="C:cytosol"/>
    <property type="evidence" value="ECO:0000266"/>
    <property type="project" value="RGD"/>
</dbReference>
<dbReference type="GO" id="GO:0030425">
    <property type="term" value="C:dendrite"/>
    <property type="evidence" value="ECO:0007669"/>
    <property type="project" value="UniProtKB-SubCell"/>
</dbReference>
<dbReference type="GO" id="GO:0005783">
    <property type="term" value="C:endoplasmic reticulum"/>
    <property type="evidence" value="ECO:0000250"/>
    <property type="project" value="UniProtKB"/>
</dbReference>
<dbReference type="GO" id="GO:0005794">
    <property type="term" value="C:Golgi apparatus"/>
    <property type="evidence" value="ECO:0000250"/>
    <property type="project" value="UniProtKB"/>
</dbReference>
<dbReference type="GO" id="GO:0005634">
    <property type="term" value="C:nucleus"/>
    <property type="evidence" value="ECO:0000266"/>
    <property type="project" value="RGD"/>
</dbReference>
<dbReference type="GO" id="GO:0043204">
    <property type="term" value="C:perikaryon"/>
    <property type="evidence" value="ECO:0007669"/>
    <property type="project" value="UniProtKB-SubCell"/>
</dbReference>
<dbReference type="GO" id="GO:0033130">
    <property type="term" value="F:acetylcholine receptor binding"/>
    <property type="evidence" value="ECO:0000266"/>
    <property type="project" value="RGD"/>
</dbReference>
<dbReference type="GO" id="GO:0043130">
    <property type="term" value="F:ubiquitin binding"/>
    <property type="evidence" value="ECO:0000318"/>
    <property type="project" value="GO_Central"/>
</dbReference>
<dbReference type="GO" id="GO:0000045">
    <property type="term" value="P:autophagosome assembly"/>
    <property type="evidence" value="ECO:0000318"/>
    <property type="project" value="GO_Central"/>
</dbReference>
<dbReference type="GO" id="GO:1990830">
    <property type="term" value="P:cellular response to leukemia inhibitory factor"/>
    <property type="evidence" value="ECO:0000266"/>
    <property type="project" value="RGD"/>
</dbReference>
<dbReference type="GO" id="GO:0007030">
    <property type="term" value="P:Golgi organization"/>
    <property type="evidence" value="ECO:0000318"/>
    <property type="project" value="GO_Central"/>
</dbReference>
<dbReference type="GO" id="GO:0061025">
    <property type="term" value="P:membrane fusion"/>
    <property type="evidence" value="ECO:0000318"/>
    <property type="project" value="GO_Central"/>
</dbReference>
<dbReference type="GO" id="GO:1904293">
    <property type="term" value="P:negative regulation of ERAD pathway"/>
    <property type="evidence" value="ECO:0000250"/>
    <property type="project" value="UniProtKB"/>
</dbReference>
<dbReference type="GO" id="GO:0045861">
    <property type="term" value="P:negative regulation of proteolysis"/>
    <property type="evidence" value="ECO:0000266"/>
    <property type="project" value="RGD"/>
</dbReference>
<dbReference type="GO" id="GO:0031468">
    <property type="term" value="P:nuclear membrane reassembly"/>
    <property type="evidence" value="ECO:0000318"/>
    <property type="project" value="GO_Central"/>
</dbReference>
<dbReference type="GO" id="GO:0045732">
    <property type="term" value="P:positive regulation of protein catabolic process"/>
    <property type="evidence" value="ECO:0000266"/>
    <property type="project" value="RGD"/>
</dbReference>
<dbReference type="GO" id="GO:0043161">
    <property type="term" value="P:proteasome-mediated ubiquitin-dependent protein catabolic process"/>
    <property type="evidence" value="ECO:0000318"/>
    <property type="project" value="GO_Central"/>
</dbReference>
<dbReference type="GO" id="GO:0010468">
    <property type="term" value="P:regulation of gene expression"/>
    <property type="evidence" value="ECO:0000315"/>
    <property type="project" value="MGI"/>
</dbReference>
<dbReference type="GO" id="GO:0042176">
    <property type="term" value="P:regulation of protein catabolic process"/>
    <property type="evidence" value="ECO:0000266"/>
    <property type="project" value="RGD"/>
</dbReference>
<dbReference type="GO" id="GO:0031396">
    <property type="term" value="P:regulation of protein ubiquitination"/>
    <property type="evidence" value="ECO:0000266"/>
    <property type="project" value="RGD"/>
</dbReference>
<dbReference type="CDD" id="cd17160">
    <property type="entry name" value="UBX_UBXN2A"/>
    <property type="match status" value="1"/>
</dbReference>
<dbReference type="FunFam" id="3.10.20.90:FF:000164">
    <property type="entry name" value="UBX domain-containing protein 2A"/>
    <property type="match status" value="1"/>
</dbReference>
<dbReference type="FunFam" id="3.30.420.210:FF:000004">
    <property type="entry name" value="UBX domain-containing protein 2A"/>
    <property type="match status" value="1"/>
</dbReference>
<dbReference type="Gene3D" id="3.10.20.90">
    <property type="entry name" value="Phosphatidylinositol 3-kinase Catalytic Subunit, Chain A, domain 1"/>
    <property type="match status" value="1"/>
</dbReference>
<dbReference type="Gene3D" id="3.30.420.210">
    <property type="entry name" value="SEP domain"/>
    <property type="match status" value="1"/>
</dbReference>
<dbReference type="InterPro" id="IPR036241">
    <property type="entry name" value="NSFL1C_SEP_dom_sf"/>
</dbReference>
<dbReference type="InterPro" id="IPR012989">
    <property type="entry name" value="SEP_domain"/>
</dbReference>
<dbReference type="InterPro" id="IPR029071">
    <property type="entry name" value="Ubiquitin-like_domsf"/>
</dbReference>
<dbReference type="InterPro" id="IPR001012">
    <property type="entry name" value="UBX_dom"/>
</dbReference>
<dbReference type="PANTHER" id="PTHR23333">
    <property type="entry name" value="UBX DOMAIN CONTAINING PROTEIN"/>
    <property type="match status" value="1"/>
</dbReference>
<dbReference type="PANTHER" id="PTHR23333:SF16">
    <property type="entry name" value="UBX DOMAIN-CONTAINING PROTEIN 2A"/>
    <property type="match status" value="1"/>
</dbReference>
<dbReference type="Pfam" id="PF08059">
    <property type="entry name" value="SEP"/>
    <property type="match status" value="1"/>
</dbReference>
<dbReference type="Pfam" id="PF00789">
    <property type="entry name" value="UBX"/>
    <property type="match status" value="1"/>
</dbReference>
<dbReference type="SMART" id="SM00553">
    <property type="entry name" value="SEP"/>
    <property type="match status" value="1"/>
</dbReference>
<dbReference type="SUPFAM" id="SSF102848">
    <property type="entry name" value="NSFL1 (p97 ATPase) cofactor p47, SEP domain"/>
    <property type="match status" value="1"/>
</dbReference>
<dbReference type="SUPFAM" id="SSF54236">
    <property type="entry name" value="Ubiquitin-like"/>
    <property type="match status" value="1"/>
</dbReference>
<dbReference type="PROSITE" id="PS51399">
    <property type="entry name" value="SEP"/>
    <property type="match status" value="1"/>
</dbReference>
<dbReference type="PROSITE" id="PS50033">
    <property type="entry name" value="UBX"/>
    <property type="match status" value="1"/>
</dbReference>
<reference evidence="10" key="1">
    <citation type="journal article" date="2004" name="Nature">
        <title>Genome sequence of the Brown Norway rat yields insights into mammalian evolution.</title>
        <authorList>
            <person name="Gibbs R.A."/>
            <person name="Weinstock G.M."/>
            <person name="Metzker M.L."/>
            <person name="Muzny D.M."/>
            <person name="Sodergren E.J."/>
            <person name="Scherer S."/>
            <person name="Scott G."/>
            <person name="Steffen D."/>
            <person name="Worley K.C."/>
            <person name="Burch P.E."/>
            <person name="Okwuonu G."/>
            <person name="Hines S."/>
            <person name="Lewis L."/>
            <person name="Deramo C."/>
            <person name="Delgado O."/>
            <person name="Dugan-Rocha S."/>
            <person name="Miner G."/>
            <person name="Morgan M."/>
            <person name="Hawes A."/>
            <person name="Gill R."/>
            <person name="Holt R.A."/>
            <person name="Adams M.D."/>
            <person name="Amanatides P.G."/>
            <person name="Baden-Tillson H."/>
            <person name="Barnstead M."/>
            <person name="Chin S."/>
            <person name="Evans C.A."/>
            <person name="Ferriera S."/>
            <person name="Fosler C."/>
            <person name="Glodek A."/>
            <person name="Gu Z."/>
            <person name="Jennings D."/>
            <person name="Kraft C.L."/>
            <person name="Nguyen T."/>
            <person name="Pfannkoch C.M."/>
            <person name="Sitter C."/>
            <person name="Sutton G.G."/>
            <person name="Venter J.C."/>
            <person name="Woodage T."/>
            <person name="Smith D."/>
            <person name="Lee H.-M."/>
            <person name="Gustafson E."/>
            <person name="Cahill P."/>
            <person name="Kana A."/>
            <person name="Doucette-Stamm L."/>
            <person name="Weinstock K."/>
            <person name="Fechtel K."/>
            <person name="Weiss R.B."/>
            <person name="Dunn D.M."/>
            <person name="Green E.D."/>
            <person name="Blakesley R.W."/>
            <person name="Bouffard G.G."/>
            <person name="De Jong P.J."/>
            <person name="Osoegawa K."/>
            <person name="Zhu B."/>
            <person name="Marra M."/>
            <person name="Schein J."/>
            <person name="Bosdet I."/>
            <person name="Fjell C."/>
            <person name="Jones S."/>
            <person name="Krzywinski M."/>
            <person name="Mathewson C."/>
            <person name="Siddiqui A."/>
            <person name="Wye N."/>
            <person name="McPherson J."/>
            <person name="Zhao S."/>
            <person name="Fraser C.M."/>
            <person name="Shetty J."/>
            <person name="Shatsman S."/>
            <person name="Geer K."/>
            <person name="Chen Y."/>
            <person name="Abramzon S."/>
            <person name="Nierman W.C."/>
            <person name="Havlak P.H."/>
            <person name="Chen R."/>
            <person name="Durbin K.J."/>
            <person name="Egan A."/>
            <person name="Ren Y."/>
            <person name="Song X.-Z."/>
            <person name="Li B."/>
            <person name="Liu Y."/>
            <person name="Qin X."/>
            <person name="Cawley S."/>
            <person name="Cooney A.J."/>
            <person name="D'Souza L.M."/>
            <person name="Martin K."/>
            <person name="Wu J.Q."/>
            <person name="Gonzalez-Garay M.L."/>
            <person name="Jackson A.R."/>
            <person name="Kalafus K.J."/>
            <person name="McLeod M.P."/>
            <person name="Milosavljevic A."/>
            <person name="Virk D."/>
            <person name="Volkov A."/>
            <person name="Wheeler D.A."/>
            <person name="Zhang Z."/>
            <person name="Bailey J.A."/>
            <person name="Eichler E.E."/>
            <person name="Tuzun E."/>
            <person name="Birney E."/>
            <person name="Mongin E."/>
            <person name="Ureta-Vidal A."/>
            <person name="Woodwark C."/>
            <person name="Zdobnov E."/>
            <person name="Bork P."/>
            <person name="Suyama M."/>
            <person name="Torrents D."/>
            <person name="Alexandersson M."/>
            <person name="Trask B.J."/>
            <person name="Young J.M."/>
            <person name="Huang H."/>
            <person name="Wang H."/>
            <person name="Xing H."/>
            <person name="Daniels S."/>
            <person name="Gietzen D."/>
            <person name="Schmidt J."/>
            <person name="Stevens K."/>
            <person name="Vitt U."/>
            <person name="Wingrove J."/>
            <person name="Camara F."/>
            <person name="Mar Alba M."/>
            <person name="Abril J.F."/>
            <person name="Guigo R."/>
            <person name="Smit A."/>
            <person name="Dubchak I."/>
            <person name="Rubin E.M."/>
            <person name="Couronne O."/>
            <person name="Poliakov A."/>
            <person name="Huebner N."/>
            <person name="Ganten D."/>
            <person name="Goesele C."/>
            <person name="Hummel O."/>
            <person name="Kreitler T."/>
            <person name="Lee Y.-A."/>
            <person name="Monti J."/>
            <person name="Schulz H."/>
            <person name="Zimdahl H."/>
            <person name="Himmelbauer H."/>
            <person name="Lehrach H."/>
            <person name="Jacob H.J."/>
            <person name="Bromberg S."/>
            <person name="Gullings-Handley J."/>
            <person name="Jensen-Seaman M.I."/>
            <person name="Kwitek A.E."/>
            <person name="Lazar J."/>
            <person name="Pasko D."/>
            <person name="Tonellato P.J."/>
            <person name="Twigger S."/>
            <person name="Ponting C.P."/>
            <person name="Duarte J.M."/>
            <person name="Rice S."/>
            <person name="Goodstadt L."/>
            <person name="Beatson S.A."/>
            <person name="Emes R.D."/>
            <person name="Winter E.E."/>
            <person name="Webber C."/>
            <person name="Brandt P."/>
            <person name="Nyakatura G."/>
            <person name="Adetobi M."/>
            <person name="Chiaromonte F."/>
            <person name="Elnitski L."/>
            <person name="Eswara P."/>
            <person name="Hardison R.C."/>
            <person name="Hou M."/>
            <person name="Kolbe D."/>
            <person name="Makova K."/>
            <person name="Miller W."/>
            <person name="Nekrutenko A."/>
            <person name="Riemer C."/>
            <person name="Schwartz S."/>
            <person name="Taylor J."/>
            <person name="Yang S."/>
            <person name="Zhang Y."/>
            <person name="Lindpaintner K."/>
            <person name="Andrews T.D."/>
            <person name="Caccamo M."/>
            <person name="Clamp M."/>
            <person name="Clarke L."/>
            <person name="Curwen V."/>
            <person name="Durbin R.M."/>
            <person name="Eyras E."/>
            <person name="Searle S.M."/>
            <person name="Cooper G.M."/>
            <person name="Batzoglou S."/>
            <person name="Brudno M."/>
            <person name="Sidow A."/>
            <person name="Stone E.A."/>
            <person name="Payseur B.A."/>
            <person name="Bourque G."/>
            <person name="Lopez-Otin C."/>
            <person name="Puente X.S."/>
            <person name="Chakrabarti K."/>
            <person name="Chatterji S."/>
            <person name="Dewey C."/>
            <person name="Pachter L."/>
            <person name="Bray N."/>
            <person name="Yap V.B."/>
            <person name="Caspi A."/>
            <person name="Tesler G."/>
            <person name="Pevzner P.A."/>
            <person name="Haussler D."/>
            <person name="Roskin K.M."/>
            <person name="Baertsch R."/>
            <person name="Clawson H."/>
            <person name="Furey T.S."/>
            <person name="Hinrichs A.S."/>
            <person name="Karolchik D."/>
            <person name="Kent W.J."/>
            <person name="Rosenbloom K.R."/>
            <person name="Trumbower H."/>
            <person name="Weirauch M."/>
            <person name="Cooper D.N."/>
            <person name="Stenson P.D."/>
            <person name="Ma B."/>
            <person name="Brent M."/>
            <person name="Arumugam M."/>
            <person name="Shteynberg D."/>
            <person name="Copley R.R."/>
            <person name="Taylor M.S."/>
            <person name="Riethman H."/>
            <person name="Mudunuri U."/>
            <person name="Peterson J."/>
            <person name="Guyer M."/>
            <person name="Felsenfeld A."/>
            <person name="Old S."/>
            <person name="Mockrin S."/>
            <person name="Collins F.S."/>
        </authorList>
    </citation>
    <scope>NUCLEOTIDE SEQUENCE [LARGE SCALE GENOMIC DNA]</scope>
    <source>
        <strain evidence="10">Brown Norway</strain>
    </source>
</reference>
<reference evidence="8 9" key="2">
    <citation type="journal article" date="2005" name="Genome Res.">
        <title>Gene and alternative splicing annotation with AIR.</title>
        <authorList>
            <person name="Florea L."/>
            <person name="Di Francesco V."/>
            <person name="Miller J."/>
            <person name="Turner R."/>
            <person name="Yao A."/>
            <person name="Harris M."/>
            <person name="Walenz B."/>
            <person name="Mobarry C."/>
            <person name="Merkulov G.V."/>
            <person name="Charlab R."/>
            <person name="Dew I."/>
            <person name="Deng Z."/>
            <person name="Istrail S."/>
            <person name="Li P."/>
            <person name="Sutton G."/>
        </authorList>
    </citation>
    <scope>NUCLEOTIDE SEQUENCE [LARGE SCALE GENOMIC DNA]</scope>
    <source>
        <strain evidence="8 9">Brown Norway</strain>
    </source>
</reference>
<reference evidence="7" key="3">
    <citation type="journal article" date="2009" name="J. Neurosci.">
        <title>UBXD4, a UBX-containing protein, regulates the cell surface number and stability of alpha3-containing nicotinic acetylcholine receptors.</title>
        <authorList>
            <person name="Rezvani K."/>
            <person name="Teng Y."/>
            <person name="Pan Y."/>
            <person name="Dani J.A."/>
            <person name="Lindstrom J."/>
            <person name="Garcia Gras E.A."/>
            <person name="McIntosh J.M."/>
            <person name="De Biasi M."/>
        </authorList>
    </citation>
    <scope>INTERACTION WITH CHRNA3</scope>
    <scope>SUBCELLULAR LOCATION</scope>
</reference>
<reference evidence="7" key="4">
    <citation type="journal article" date="2015" name="Biochem. Pharmacol.">
        <title>UBXN2A regulates nicotinic receptor degradation by modulating the E3 ligase activity of CHIP.</title>
        <authorList>
            <person name="Teng Y."/>
            <person name="Rezvani K."/>
            <person name="De Biasi M."/>
        </authorList>
    </citation>
    <scope>FUNCTION</scope>
    <scope>IDENTIFICATION IN A COMPLEX WITH STUB1; VCP AND CHRNA3</scope>
    <scope>INTERACTION WITH CHRNA3 AND VCP</scope>
</reference>
<gene>
    <name evidence="11" type="primary">Ubxn2a</name>
</gene>
<evidence type="ECO:0000250" key="1">
    <source>
        <dbReference type="UniProtKB" id="P68543"/>
    </source>
</evidence>
<evidence type="ECO:0000250" key="2">
    <source>
        <dbReference type="UniProtKB" id="Q99KJ0"/>
    </source>
</evidence>
<evidence type="ECO:0000255" key="3">
    <source>
        <dbReference type="PROSITE-ProRule" id="PRU00215"/>
    </source>
</evidence>
<evidence type="ECO:0000255" key="4">
    <source>
        <dbReference type="PROSITE-ProRule" id="PRU00732"/>
    </source>
</evidence>
<evidence type="ECO:0000269" key="5">
    <source>
    </source>
</evidence>
<evidence type="ECO:0000269" key="6">
    <source>
    </source>
</evidence>
<evidence type="ECO:0000305" key="7"/>
<evidence type="ECO:0000312" key="8">
    <source>
        <dbReference type="EMBL" id="EDM03052.1"/>
    </source>
</evidence>
<evidence type="ECO:0000312" key="9">
    <source>
        <dbReference type="EMBL" id="EDM03053.1"/>
    </source>
</evidence>
<evidence type="ECO:0000312" key="10">
    <source>
        <dbReference type="Proteomes" id="UP000002494"/>
    </source>
</evidence>
<evidence type="ECO:0000312" key="11">
    <source>
        <dbReference type="RGD" id="1589027"/>
    </source>
</evidence>